<gene>
    <name evidence="1" type="primary">rpmD</name>
    <name type="ordered locus">NTHI0959</name>
</gene>
<keyword id="KW-0687">Ribonucleoprotein</keyword>
<keyword id="KW-0689">Ribosomal protein</keyword>
<reference key="1">
    <citation type="journal article" date="2005" name="J. Bacteriol.">
        <title>Genomic sequence of an otitis media isolate of nontypeable Haemophilus influenzae: comparative study with H. influenzae serotype d, strain KW20.</title>
        <authorList>
            <person name="Harrison A."/>
            <person name="Dyer D.W."/>
            <person name="Gillaspy A."/>
            <person name="Ray W.C."/>
            <person name="Mungur R."/>
            <person name="Carson M.B."/>
            <person name="Zhong H."/>
            <person name="Gipson J."/>
            <person name="Gipson M."/>
            <person name="Johnson L.S."/>
            <person name="Lewis L."/>
            <person name="Bakaletz L.O."/>
            <person name="Munson R.S. Jr."/>
        </authorList>
    </citation>
    <scope>NUCLEOTIDE SEQUENCE [LARGE SCALE GENOMIC DNA]</scope>
    <source>
        <strain>86-028NP</strain>
    </source>
</reference>
<name>RL30_HAEI8</name>
<dbReference type="EMBL" id="CP000057">
    <property type="protein sequence ID" value="AAX87844.1"/>
    <property type="molecule type" value="Genomic_DNA"/>
</dbReference>
<dbReference type="RefSeq" id="WP_005543631.1">
    <property type="nucleotide sequence ID" value="NC_007146.2"/>
</dbReference>
<dbReference type="SMR" id="Q4QMA3"/>
<dbReference type="GeneID" id="93226855"/>
<dbReference type="KEGG" id="hit:NTHI0959"/>
<dbReference type="HOGENOM" id="CLU_131047_1_4_6"/>
<dbReference type="Proteomes" id="UP000002525">
    <property type="component" value="Chromosome"/>
</dbReference>
<dbReference type="GO" id="GO:0022625">
    <property type="term" value="C:cytosolic large ribosomal subunit"/>
    <property type="evidence" value="ECO:0007669"/>
    <property type="project" value="TreeGrafter"/>
</dbReference>
<dbReference type="GO" id="GO:0003735">
    <property type="term" value="F:structural constituent of ribosome"/>
    <property type="evidence" value="ECO:0007669"/>
    <property type="project" value="InterPro"/>
</dbReference>
<dbReference type="GO" id="GO:0006412">
    <property type="term" value="P:translation"/>
    <property type="evidence" value="ECO:0007669"/>
    <property type="project" value="UniProtKB-UniRule"/>
</dbReference>
<dbReference type="CDD" id="cd01658">
    <property type="entry name" value="Ribosomal_L30"/>
    <property type="match status" value="1"/>
</dbReference>
<dbReference type="FunFam" id="3.30.1390.20:FF:000001">
    <property type="entry name" value="50S ribosomal protein L30"/>
    <property type="match status" value="1"/>
</dbReference>
<dbReference type="Gene3D" id="3.30.1390.20">
    <property type="entry name" value="Ribosomal protein L30, ferredoxin-like fold domain"/>
    <property type="match status" value="1"/>
</dbReference>
<dbReference type="HAMAP" id="MF_01371_B">
    <property type="entry name" value="Ribosomal_uL30_B"/>
    <property type="match status" value="1"/>
</dbReference>
<dbReference type="InterPro" id="IPR036919">
    <property type="entry name" value="Ribo_uL30_ferredoxin-like_sf"/>
</dbReference>
<dbReference type="InterPro" id="IPR005996">
    <property type="entry name" value="Ribosomal_uL30_bac-type"/>
</dbReference>
<dbReference type="InterPro" id="IPR018038">
    <property type="entry name" value="Ribosomal_uL30_CS"/>
</dbReference>
<dbReference type="InterPro" id="IPR016082">
    <property type="entry name" value="Ribosomal_uL30_ferredoxin-like"/>
</dbReference>
<dbReference type="NCBIfam" id="TIGR01308">
    <property type="entry name" value="rpmD_bact"/>
    <property type="match status" value="1"/>
</dbReference>
<dbReference type="PANTHER" id="PTHR15892:SF2">
    <property type="entry name" value="LARGE RIBOSOMAL SUBUNIT PROTEIN UL30M"/>
    <property type="match status" value="1"/>
</dbReference>
<dbReference type="PANTHER" id="PTHR15892">
    <property type="entry name" value="MITOCHONDRIAL RIBOSOMAL PROTEIN L30"/>
    <property type="match status" value="1"/>
</dbReference>
<dbReference type="Pfam" id="PF00327">
    <property type="entry name" value="Ribosomal_L30"/>
    <property type="match status" value="1"/>
</dbReference>
<dbReference type="PIRSF" id="PIRSF002211">
    <property type="entry name" value="Ribosomal_L30_bac-type"/>
    <property type="match status" value="1"/>
</dbReference>
<dbReference type="SUPFAM" id="SSF55129">
    <property type="entry name" value="Ribosomal protein L30p/L7e"/>
    <property type="match status" value="1"/>
</dbReference>
<dbReference type="PROSITE" id="PS00634">
    <property type="entry name" value="RIBOSOMAL_L30"/>
    <property type="match status" value="1"/>
</dbReference>
<proteinExistence type="inferred from homology"/>
<evidence type="ECO:0000255" key="1">
    <source>
        <dbReference type="HAMAP-Rule" id="MF_01371"/>
    </source>
</evidence>
<evidence type="ECO:0000305" key="2"/>
<accession>Q4QMA3</accession>
<feature type="chain" id="PRO_0000273795" description="Large ribosomal subunit protein uL30">
    <location>
        <begin position="1"/>
        <end position="59"/>
    </location>
</feature>
<comment type="subunit">
    <text evidence="1">Part of the 50S ribosomal subunit.</text>
</comment>
<comment type="similarity">
    <text evidence="1">Belongs to the universal ribosomal protein uL30 family.</text>
</comment>
<sequence length="59" mass="6678">MAKTIKVTQVRSSIARLPKHKATLRGLGLRHMHHTVELIDTPAVRGMINQVSYMVKVEE</sequence>
<organism>
    <name type="scientific">Haemophilus influenzae (strain 86-028NP)</name>
    <dbReference type="NCBI Taxonomy" id="281310"/>
    <lineage>
        <taxon>Bacteria</taxon>
        <taxon>Pseudomonadati</taxon>
        <taxon>Pseudomonadota</taxon>
        <taxon>Gammaproteobacteria</taxon>
        <taxon>Pasteurellales</taxon>
        <taxon>Pasteurellaceae</taxon>
        <taxon>Haemophilus</taxon>
    </lineage>
</organism>
<protein>
    <recommendedName>
        <fullName evidence="1">Large ribosomal subunit protein uL30</fullName>
    </recommendedName>
    <alternativeName>
        <fullName evidence="2">50S ribosomal protein L30</fullName>
    </alternativeName>
</protein>